<proteinExistence type="inferred from homology"/>
<organism>
    <name type="scientific">Geobacillus sp. (strain WCH70)</name>
    <dbReference type="NCBI Taxonomy" id="471223"/>
    <lineage>
        <taxon>Bacteria</taxon>
        <taxon>Bacillati</taxon>
        <taxon>Bacillota</taxon>
        <taxon>Bacilli</taxon>
        <taxon>Bacillales</taxon>
        <taxon>Anoxybacillaceae</taxon>
        <taxon>Geobacillus</taxon>
    </lineage>
</organism>
<evidence type="ECO:0000255" key="1">
    <source>
        <dbReference type="HAMAP-Rule" id="MF_00420"/>
    </source>
</evidence>
<sequence>MSLLLEPTPTMIKEEKLYREMGLTDEEFAMIEKILGRLPNYTETGIFSVMWSEHCSYKNSKPVLKKFPTEGKHVLQGPGEGAGIVDIGDGLAVAFKIESHNHPSAIEPYQGAATGVGGIIRDVFSMGARPIALLNSLRFGELTSPRVKYLFEHVVAGIAGYGNCVGIPTVGGEVQFDAAYEGNPLVNAMCVGIIRHEDIQRGIASGVGNTVMYVGAKTGRDGIHGATFASEELTEQSEAKRPAVQVGDPFMEKLLLEACLEVVKSDALVGIQDMGAAGLTSSSAEMASKGGFGIEMNLDLVPQREAGMTPYEMMLSESQERMLLVVKQGREQEIYELFAKYGLEAKAIGKVTDDKMLRLYFRGEVVAEIPVDALAKDAPVYHKPSKEPAYYREFQAMEPYVPAVSNYEETLLSLLAQPTIASKEWVYQQYDYMVRTNTVVAPGSDAAVLRIRGTNKALAMTTDCNSRYIYLDPETGGKIAVAEAARNIVCSGAKPLAITDCLNFGNPEKPEIFWQLEKAVDGMSEVCRVLGTPVISGNVSLYNETNGEAIYPTPVIGMVGLVEDIRHITTQAFQQAGDLIYVIGEAKQEFGGSELQKLLEGRIFGKAPEIDLATEAKRQQELLTAIQAGVVASAHDIAEGGFAVALAECVMSTNGLGAKVTVDGDITSQLFSETQSRFIVSVKKENQEKFEKLVEAKLIGEVTNDGTLLVERASGEVVIQLSVEQMRSVWKGAIPCLLKSKA</sequence>
<gene>
    <name evidence="1" type="primary">purL</name>
    <name type="ordered locus">GWCH70_0259</name>
</gene>
<reference key="1">
    <citation type="submission" date="2009-06" db="EMBL/GenBank/DDBJ databases">
        <title>Complete sequence of chromosome of Geopacillus sp. WCH70.</title>
        <authorList>
            <consortium name="US DOE Joint Genome Institute"/>
            <person name="Lucas S."/>
            <person name="Copeland A."/>
            <person name="Lapidus A."/>
            <person name="Glavina del Rio T."/>
            <person name="Dalin E."/>
            <person name="Tice H."/>
            <person name="Bruce D."/>
            <person name="Goodwin L."/>
            <person name="Pitluck S."/>
            <person name="Chertkov O."/>
            <person name="Brettin T."/>
            <person name="Detter J.C."/>
            <person name="Han C."/>
            <person name="Larimer F."/>
            <person name="Land M."/>
            <person name="Hauser L."/>
            <person name="Kyrpides N."/>
            <person name="Mikhailova N."/>
            <person name="Brumm P."/>
            <person name="Mead D.A."/>
            <person name="Richardson P."/>
        </authorList>
    </citation>
    <scope>NUCLEOTIDE SEQUENCE [LARGE SCALE GENOMIC DNA]</scope>
    <source>
        <strain>WCH70</strain>
    </source>
</reference>
<keyword id="KW-0067">ATP-binding</keyword>
<keyword id="KW-0963">Cytoplasm</keyword>
<keyword id="KW-0436">Ligase</keyword>
<keyword id="KW-0460">Magnesium</keyword>
<keyword id="KW-0479">Metal-binding</keyword>
<keyword id="KW-0547">Nucleotide-binding</keyword>
<keyword id="KW-0658">Purine biosynthesis</keyword>
<comment type="function">
    <text evidence="1">Part of the phosphoribosylformylglycinamidine synthase complex involved in the purines biosynthetic pathway. Catalyzes the ATP-dependent conversion of formylglycinamide ribonucleotide (FGAR) and glutamine to yield formylglycinamidine ribonucleotide (FGAM) and glutamate. The FGAM synthase complex is composed of three subunits. PurQ produces an ammonia molecule by converting glutamine to glutamate. PurL transfers the ammonia molecule to FGAR to form FGAM in an ATP-dependent manner. PurS interacts with PurQ and PurL and is thought to assist in the transfer of the ammonia molecule from PurQ to PurL.</text>
</comment>
<comment type="catalytic activity">
    <reaction evidence="1">
        <text>N(2)-formyl-N(1)-(5-phospho-beta-D-ribosyl)glycinamide + L-glutamine + ATP + H2O = 2-formamido-N(1)-(5-O-phospho-beta-D-ribosyl)acetamidine + L-glutamate + ADP + phosphate + H(+)</text>
        <dbReference type="Rhea" id="RHEA:17129"/>
        <dbReference type="ChEBI" id="CHEBI:15377"/>
        <dbReference type="ChEBI" id="CHEBI:15378"/>
        <dbReference type="ChEBI" id="CHEBI:29985"/>
        <dbReference type="ChEBI" id="CHEBI:30616"/>
        <dbReference type="ChEBI" id="CHEBI:43474"/>
        <dbReference type="ChEBI" id="CHEBI:58359"/>
        <dbReference type="ChEBI" id="CHEBI:147286"/>
        <dbReference type="ChEBI" id="CHEBI:147287"/>
        <dbReference type="ChEBI" id="CHEBI:456216"/>
        <dbReference type="EC" id="6.3.5.3"/>
    </reaction>
</comment>
<comment type="pathway">
    <text evidence="1">Purine metabolism; IMP biosynthesis via de novo pathway; 5-amino-1-(5-phospho-D-ribosyl)imidazole from N(2)-formyl-N(1)-(5-phospho-D-ribosyl)glycinamide: step 1/2.</text>
</comment>
<comment type="subunit">
    <text evidence="1">Monomer. Part of the FGAM synthase complex composed of 1 PurL, 1 PurQ and 2 PurS subunits.</text>
</comment>
<comment type="subcellular location">
    <subcellularLocation>
        <location evidence="1">Cytoplasm</location>
    </subcellularLocation>
</comment>
<comment type="similarity">
    <text evidence="1">Belongs to the FGAMS family.</text>
</comment>
<name>PURL_GEOSW</name>
<accession>C5D4I0</accession>
<feature type="chain" id="PRO_1000206040" description="Phosphoribosylformylglycinamidine synthase subunit PurL">
    <location>
        <begin position="1"/>
        <end position="742"/>
    </location>
</feature>
<feature type="active site" evidence="1">
    <location>
        <position position="54"/>
    </location>
</feature>
<feature type="active site" description="Proton acceptor" evidence="1">
    <location>
        <position position="100"/>
    </location>
</feature>
<feature type="binding site" evidence="1">
    <location>
        <position position="57"/>
    </location>
    <ligand>
        <name>ATP</name>
        <dbReference type="ChEBI" id="CHEBI:30616"/>
    </ligand>
</feature>
<feature type="binding site" evidence="1">
    <location>
        <position position="96"/>
    </location>
    <ligand>
        <name>ATP</name>
        <dbReference type="ChEBI" id="CHEBI:30616"/>
    </ligand>
</feature>
<feature type="binding site" evidence="1">
    <location>
        <position position="98"/>
    </location>
    <ligand>
        <name>Mg(2+)</name>
        <dbReference type="ChEBI" id="CHEBI:18420"/>
        <label>1</label>
    </ligand>
</feature>
<feature type="binding site" evidence="1">
    <location>
        <begin position="99"/>
        <end position="102"/>
    </location>
    <ligand>
        <name>substrate</name>
    </ligand>
</feature>
<feature type="binding site" evidence="1">
    <location>
        <position position="121"/>
    </location>
    <ligand>
        <name>substrate</name>
    </ligand>
</feature>
<feature type="binding site" evidence="1">
    <location>
        <position position="122"/>
    </location>
    <ligand>
        <name>Mg(2+)</name>
        <dbReference type="ChEBI" id="CHEBI:18420"/>
        <label>2</label>
    </ligand>
</feature>
<feature type="binding site" evidence="1">
    <location>
        <position position="245"/>
    </location>
    <ligand>
        <name>substrate</name>
    </ligand>
</feature>
<feature type="binding site" evidence="1">
    <location>
        <position position="273"/>
    </location>
    <ligand>
        <name>Mg(2+)</name>
        <dbReference type="ChEBI" id="CHEBI:18420"/>
        <label>2</label>
    </ligand>
</feature>
<feature type="binding site" evidence="1">
    <location>
        <begin position="317"/>
        <end position="319"/>
    </location>
    <ligand>
        <name>substrate</name>
    </ligand>
</feature>
<feature type="binding site" evidence="1">
    <location>
        <position position="500"/>
    </location>
    <ligand>
        <name>ATP</name>
        <dbReference type="ChEBI" id="CHEBI:30616"/>
    </ligand>
</feature>
<feature type="binding site" evidence="1">
    <location>
        <position position="537"/>
    </location>
    <ligand>
        <name>ATP</name>
        <dbReference type="ChEBI" id="CHEBI:30616"/>
    </ligand>
</feature>
<feature type="binding site" evidence="1">
    <location>
        <position position="538"/>
    </location>
    <ligand>
        <name>Mg(2+)</name>
        <dbReference type="ChEBI" id="CHEBI:18420"/>
        <label>1</label>
    </ligand>
</feature>
<feature type="binding site" evidence="1">
    <location>
        <position position="540"/>
    </location>
    <ligand>
        <name>substrate</name>
    </ligand>
</feature>
<dbReference type="EC" id="6.3.5.3" evidence="1"/>
<dbReference type="EMBL" id="CP001638">
    <property type="protein sequence ID" value="ACS23188.1"/>
    <property type="molecule type" value="Genomic_DNA"/>
</dbReference>
<dbReference type="SMR" id="C5D4I0"/>
<dbReference type="STRING" id="471223.GWCH70_0259"/>
<dbReference type="KEGG" id="gwc:GWCH70_0259"/>
<dbReference type="eggNOG" id="COG0046">
    <property type="taxonomic scope" value="Bacteria"/>
</dbReference>
<dbReference type="HOGENOM" id="CLU_003100_0_1_9"/>
<dbReference type="OrthoDB" id="9804441at2"/>
<dbReference type="UniPathway" id="UPA00074">
    <property type="reaction ID" value="UER00128"/>
</dbReference>
<dbReference type="GO" id="GO:0005737">
    <property type="term" value="C:cytoplasm"/>
    <property type="evidence" value="ECO:0007669"/>
    <property type="project" value="UniProtKB-SubCell"/>
</dbReference>
<dbReference type="GO" id="GO:0005524">
    <property type="term" value="F:ATP binding"/>
    <property type="evidence" value="ECO:0007669"/>
    <property type="project" value="UniProtKB-UniRule"/>
</dbReference>
<dbReference type="GO" id="GO:0000287">
    <property type="term" value="F:magnesium ion binding"/>
    <property type="evidence" value="ECO:0007669"/>
    <property type="project" value="UniProtKB-UniRule"/>
</dbReference>
<dbReference type="GO" id="GO:0004642">
    <property type="term" value="F:phosphoribosylformylglycinamidine synthase activity"/>
    <property type="evidence" value="ECO:0007669"/>
    <property type="project" value="UniProtKB-UniRule"/>
</dbReference>
<dbReference type="GO" id="GO:0006189">
    <property type="term" value="P:'de novo' IMP biosynthetic process"/>
    <property type="evidence" value="ECO:0007669"/>
    <property type="project" value="UniProtKB-UniRule"/>
</dbReference>
<dbReference type="CDD" id="cd02203">
    <property type="entry name" value="PurL_repeat1"/>
    <property type="match status" value="1"/>
</dbReference>
<dbReference type="CDD" id="cd02204">
    <property type="entry name" value="PurL_repeat2"/>
    <property type="match status" value="1"/>
</dbReference>
<dbReference type="FunFam" id="3.30.1330.10:FF:000004">
    <property type="entry name" value="Phosphoribosylformylglycinamidine synthase subunit PurL"/>
    <property type="match status" value="1"/>
</dbReference>
<dbReference type="FunFam" id="3.30.1330.10:FF:000011">
    <property type="entry name" value="Phosphoribosylformylglycinamidine synthase subunit PurL"/>
    <property type="match status" value="1"/>
</dbReference>
<dbReference type="FunFam" id="3.90.650.10:FF:000009">
    <property type="entry name" value="Phosphoribosylformylglycinamidine synthase subunit PurL"/>
    <property type="match status" value="1"/>
</dbReference>
<dbReference type="Gene3D" id="3.90.650.10">
    <property type="entry name" value="PurM-like C-terminal domain"/>
    <property type="match status" value="2"/>
</dbReference>
<dbReference type="Gene3D" id="3.30.1330.10">
    <property type="entry name" value="PurM-like, N-terminal domain"/>
    <property type="match status" value="2"/>
</dbReference>
<dbReference type="HAMAP" id="MF_00420">
    <property type="entry name" value="PurL_2"/>
    <property type="match status" value="1"/>
</dbReference>
<dbReference type="InterPro" id="IPR010074">
    <property type="entry name" value="PRibForGlyAmidine_synth_PurL"/>
</dbReference>
<dbReference type="InterPro" id="IPR041609">
    <property type="entry name" value="PurL_linker"/>
</dbReference>
<dbReference type="InterPro" id="IPR010918">
    <property type="entry name" value="PurM-like_C_dom"/>
</dbReference>
<dbReference type="InterPro" id="IPR036676">
    <property type="entry name" value="PurM-like_C_sf"/>
</dbReference>
<dbReference type="InterPro" id="IPR016188">
    <property type="entry name" value="PurM-like_N"/>
</dbReference>
<dbReference type="InterPro" id="IPR036921">
    <property type="entry name" value="PurM-like_N_sf"/>
</dbReference>
<dbReference type="NCBIfam" id="TIGR01736">
    <property type="entry name" value="FGAM_synth_II"/>
    <property type="match status" value="1"/>
</dbReference>
<dbReference type="NCBIfam" id="NF002290">
    <property type="entry name" value="PRK01213.1"/>
    <property type="match status" value="1"/>
</dbReference>
<dbReference type="PANTHER" id="PTHR43555">
    <property type="entry name" value="PHOSPHORIBOSYLFORMYLGLYCINAMIDINE SYNTHASE SUBUNIT PURL"/>
    <property type="match status" value="1"/>
</dbReference>
<dbReference type="PANTHER" id="PTHR43555:SF1">
    <property type="entry name" value="PHOSPHORIBOSYLFORMYLGLYCINAMIDINE SYNTHASE SUBUNIT PURL"/>
    <property type="match status" value="1"/>
</dbReference>
<dbReference type="Pfam" id="PF00586">
    <property type="entry name" value="AIRS"/>
    <property type="match status" value="2"/>
</dbReference>
<dbReference type="Pfam" id="PF02769">
    <property type="entry name" value="AIRS_C"/>
    <property type="match status" value="2"/>
</dbReference>
<dbReference type="Pfam" id="PF18072">
    <property type="entry name" value="FGAR-AT_linker"/>
    <property type="match status" value="1"/>
</dbReference>
<dbReference type="PIRSF" id="PIRSF001587">
    <property type="entry name" value="FGAM_synthase_II"/>
    <property type="match status" value="1"/>
</dbReference>
<dbReference type="SUPFAM" id="SSF56042">
    <property type="entry name" value="PurM C-terminal domain-like"/>
    <property type="match status" value="2"/>
</dbReference>
<dbReference type="SUPFAM" id="SSF55326">
    <property type="entry name" value="PurM N-terminal domain-like"/>
    <property type="match status" value="2"/>
</dbReference>
<protein>
    <recommendedName>
        <fullName evidence="1">Phosphoribosylformylglycinamidine synthase subunit PurL</fullName>
        <shortName evidence="1">FGAM synthase</shortName>
        <ecNumber evidence="1">6.3.5.3</ecNumber>
    </recommendedName>
    <alternativeName>
        <fullName evidence="1">Formylglycinamide ribonucleotide amidotransferase subunit II</fullName>
        <shortName evidence="1">FGAR amidotransferase II</shortName>
        <shortName evidence="1">FGAR-AT II</shortName>
    </alternativeName>
    <alternativeName>
        <fullName evidence="1">Glutamine amidotransferase PurL</fullName>
    </alternativeName>
    <alternativeName>
        <fullName evidence="1">Phosphoribosylformylglycinamidine synthase subunit II</fullName>
    </alternativeName>
</protein>